<accession>Q69024</accession>
<accession>E9RH71</accession>
<gene>
    <name evidence="3" type="primary">gB</name>
    <name type="ORF">UL55</name>
</gene>
<name>GB_GPCMV</name>
<proteinExistence type="inferred from homology"/>
<protein>
    <recommendedName>
        <fullName evidence="3">Envelope glycoprotein B</fullName>
        <shortName evidence="3">gB</shortName>
    </recommendedName>
</protein>
<comment type="function">
    <text evidence="3">Envelope glycoprotein that forms spikes at the surface of virion envelope. Essential for the initial attachment to heparan sulfate moieties of the host cell surface proteoglycans. Involved in fusion of viral and cellular membranes leading to virus entry into the host cell. Following initial binding to its host receptors, membrane fusion is mediated by the fusion machinery composed at least of gB and the heterodimer gH/gL. May be involved in the fusion between the virion envelope and the outer nuclear membrane during virion egress.</text>
</comment>
<comment type="subunit">
    <text evidence="3">Homotrimer; disulfide-linked. Binds to heparan sulfate proteoglycans. Interacts with gH/gL heterodimer.</text>
</comment>
<comment type="subcellular location">
    <subcellularLocation>
        <location evidence="3">Virion membrane</location>
        <topology evidence="3">Single-pass type I membrane protein</topology>
    </subcellularLocation>
    <subcellularLocation>
        <location evidence="3">Host cell membrane</location>
        <topology evidence="3">Single-pass type I membrane protein</topology>
    </subcellularLocation>
    <subcellularLocation>
        <location evidence="3">Host endosome membrane</location>
        <topology evidence="3">Single-pass type I membrane protein</topology>
    </subcellularLocation>
    <subcellularLocation>
        <location evidence="3">Host Golgi apparatus membrane</location>
        <topology evidence="3">Single-pass type I membrane protein</topology>
    </subcellularLocation>
    <text evidence="3">During virion morphogenesis, this protein probably accumulates in the endosomes and trans-Golgi where secondary envelopment occurs. It is probably transported to the cell surface from where it is endocytosed and directed to the trans-Golgi network (TGN).</text>
</comment>
<comment type="PTM">
    <text evidence="1">A proteolytic cleavage by host furin generates two subunits that remain linked by disulfide bonds.</text>
</comment>
<comment type="similarity">
    <text evidence="3">Belongs to the herpesviridae glycoprotein B family.</text>
</comment>
<keyword id="KW-1015">Disulfide bond</keyword>
<keyword id="KW-0325">Glycoprotein</keyword>
<keyword id="KW-1032">Host cell membrane</keyword>
<keyword id="KW-1039">Host endosome</keyword>
<keyword id="KW-1040">Host Golgi apparatus</keyword>
<keyword id="KW-1043">Host membrane</keyword>
<keyword id="KW-0945">Host-virus interaction</keyword>
<keyword id="KW-0472">Membrane</keyword>
<keyword id="KW-1185">Reference proteome</keyword>
<keyword id="KW-0732">Signal</keyword>
<keyword id="KW-0812">Transmembrane</keyword>
<keyword id="KW-1133">Transmembrane helix</keyword>
<keyword id="KW-1161">Viral attachment to host cell</keyword>
<keyword id="KW-0261">Viral envelope protein</keyword>
<keyword id="KW-0946">Virion</keyword>
<keyword id="KW-1160">Virus entry into host cell</keyword>
<organism>
    <name type="scientific">Guinea pig cytomegalovirus (strain 22122)</name>
    <name type="common">GPCMV</name>
    <dbReference type="NCBI Taxonomy" id="103920"/>
    <lineage>
        <taxon>Viruses</taxon>
        <taxon>Duplodnaviria</taxon>
        <taxon>Heunggongvirae</taxon>
        <taxon>Peploviricota</taxon>
        <taxon>Herviviricetes</taxon>
        <taxon>Herpesvirales</taxon>
        <taxon>Orthoherpesviridae</taxon>
        <taxon>Betaherpesvirinae</taxon>
        <taxon>Quwivirus</taxon>
        <taxon>Quwivirus caviidbeta2</taxon>
    </lineage>
</organism>
<dbReference type="EMBL" id="KC503762">
    <property type="protein sequence ID" value="AGE11534.1"/>
    <property type="molecule type" value="Genomic_DNA"/>
</dbReference>
<dbReference type="EMBL" id="AB592928">
    <property type="protein sequence ID" value="BAJ78523.1"/>
    <property type="molecule type" value="Genomic_DNA"/>
</dbReference>
<dbReference type="SMR" id="Q69024"/>
<dbReference type="GlyCosmos" id="Q69024">
    <property type="glycosylation" value="14 sites, No reported glycans"/>
</dbReference>
<dbReference type="KEGG" id="vg:14536657"/>
<dbReference type="Proteomes" id="UP000102041">
    <property type="component" value="Segment"/>
</dbReference>
<dbReference type="Proteomes" id="UP000132784">
    <property type="component" value="Segment"/>
</dbReference>
<dbReference type="GO" id="GO:0044175">
    <property type="term" value="C:host cell endosome membrane"/>
    <property type="evidence" value="ECO:0007669"/>
    <property type="project" value="UniProtKB-SubCell"/>
</dbReference>
<dbReference type="GO" id="GO:0044178">
    <property type="term" value="C:host cell Golgi membrane"/>
    <property type="evidence" value="ECO:0007669"/>
    <property type="project" value="UniProtKB-SubCell"/>
</dbReference>
<dbReference type="GO" id="GO:0020002">
    <property type="term" value="C:host cell plasma membrane"/>
    <property type="evidence" value="ECO:0007669"/>
    <property type="project" value="UniProtKB-SubCell"/>
</dbReference>
<dbReference type="GO" id="GO:0016020">
    <property type="term" value="C:membrane"/>
    <property type="evidence" value="ECO:0007669"/>
    <property type="project" value="UniProtKB-KW"/>
</dbReference>
<dbReference type="GO" id="GO:0019031">
    <property type="term" value="C:viral envelope"/>
    <property type="evidence" value="ECO:0007669"/>
    <property type="project" value="UniProtKB-KW"/>
</dbReference>
<dbReference type="GO" id="GO:0055036">
    <property type="term" value="C:virion membrane"/>
    <property type="evidence" value="ECO:0007669"/>
    <property type="project" value="UniProtKB-SubCell"/>
</dbReference>
<dbReference type="GO" id="GO:0046718">
    <property type="term" value="P:symbiont entry into host cell"/>
    <property type="evidence" value="ECO:0007669"/>
    <property type="project" value="UniProtKB-KW"/>
</dbReference>
<dbReference type="GO" id="GO:0019062">
    <property type="term" value="P:virion attachment to host cell"/>
    <property type="evidence" value="ECO:0007669"/>
    <property type="project" value="UniProtKB-KW"/>
</dbReference>
<dbReference type="Gene3D" id="1.20.5.1890">
    <property type="match status" value="1"/>
</dbReference>
<dbReference type="Gene3D" id="2.30.29.100">
    <property type="match status" value="1"/>
</dbReference>
<dbReference type="Gene3D" id="2.30.30.1230">
    <property type="match status" value="1"/>
</dbReference>
<dbReference type="Gene3D" id="6.10.250.3280">
    <property type="match status" value="1"/>
</dbReference>
<dbReference type="HAMAP" id="MF_04032">
    <property type="entry name" value="HSV_GB"/>
    <property type="match status" value="1"/>
</dbReference>
<dbReference type="InterPro" id="IPR035377">
    <property type="entry name" value="Glycoprot_B_PH1"/>
</dbReference>
<dbReference type="InterPro" id="IPR035381">
    <property type="entry name" value="Glycoprot_B_PH2"/>
</dbReference>
<dbReference type="InterPro" id="IPR038631">
    <property type="entry name" value="Glycoprot_B_PH2_sf"/>
</dbReference>
<dbReference type="InterPro" id="IPR055341">
    <property type="entry name" value="Glycoprotein_B_ecto_C"/>
</dbReference>
<dbReference type="InterPro" id="IPR000234">
    <property type="entry name" value="Herpes_Glycoprot_B"/>
</dbReference>
<dbReference type="Pfam" id="PF17416">
    <property type="entry name" value="Glycoprot_B_PH1"/>
    <property type="match status" value="1"/>
</dbReference>
<dbReference type="Pfam" id="PF17417">
    <property type="entry name" value="Glycoprot_B_PH2"/>
    <property type="match status" value="1"/>
</dbReference>
<dbReference type="Pfam" id="PF00606">
    <property type="entry name" value="Glycoprotein_B"/>
    <property type="match status" value="1"/>
</dbReference>
<dbReference type="SUPFAM" id="SSF161008">
    <property type="entry name" value="Viral glycoprotein ectodomain-like"/>
    <property type="match status" value="1"/>
</dbReference>
<reference key="1">
    <citation type="journal article" date="1994" name="Virology">
        <title>Cloning and characterization of the guinea pig cytomegalovirus glycoprotein B gene.</title>
        <authorList>
            <person name="Schleiss M.R."/>
        </authorList>
    </citation>
    <scope>NUCLEOTIDE SEQUENCE [GENOMIC DNA]</scope>
</reference>
<reference key="2">
    <citation type="journal article" date="2008" name="Virol. J.">
        <title>Analysis of the nucleotide sequence of the guinea pig cytomegalovirus (GPCMV) genome.</title>
        <authorList>
            <person name="Schleiss M.R."/>
            <person name="McGregor A."/>
            <person name="Choi K.Y."/>
            <person name="Date S.V."/>
            <person name="Cui X."/>
            <person name="McVoy M.A."/>
        </authorList>
    </citation>
    <scope>NUCLEOTIDE SEQUENCE [LARGE SCALE GENOMIC DNA]</scope>
</reference>
<reference key="3">
    <citation type="journal article" date="2011" name="J. Gen. Virol.">
        <title>Re-evaluation of the genome sequence of guinea pig cytomegalovirus.</title>
        <authorList>
            <person name="Kanai K."/>
            <person name="Yamada S."/>
            <person name="Yamamoto Y."/>
            <person name="Fukui Y."/>
            <person name="Kurane I."/>
            <person name="Inoue N."/>
        </authorList>
    </citation>
    <scope>NUCLEOTIDE SEQUENCE [LARGE SCALE GENOMIC DNA]</scope>
    <source>
        <strain>22122/ATCC-P5</strain>
    </source>
</reference>
<reference key="4">
    <citation type="journal article" date="2013" name="Genome Announc.">
        <title>Complete genome sequence of pathogenic Guinea pig cytomegalovirus from salivary gland homogenates of infected animals.</title>
        <authorList>
            <person name="Yang D."/>
            <person name="Tamburro K."/>
            <person name="Dittmer D."/>
            <person name="Cui X."/>
            <person name="McVoy M.A."/>
            <person name="Hernandez-Alvarado N."/>
            <person name="Schleiss M.R."/>
        </authorList>
    </citation>
    <scope>NUCLEOTIDE SEQUENCE [LARGE SCALE GENOMIC DNA]</scope>
    <source>
        <strain>22122</strain>
    </source>
</reference>
<sequence length="901" mass="102240">MRPVRGIARSRILSCSWRGTWTSALTILYLGVYCESTTVTPTTVEDTTVSNGNHSDASRNNTVIRNLTASVDFSQRKLYPYRICSMSMGTDLVRFARTIQCVPFNPRVNSEEGIMLIYKRNILPYVFTAYTYQKELLFQRSYKYVTYDYLLGYSREFVALPMWEIFLVNSRGQCYTSHQRVIGADRYIAYHNDNEVNETMWLMRDDMGNDDTYRYITVKEHARTPGSVWLYKETCSMNCIVTKTKGKSKFPYDMFVLPSGVIVNISPFYNGSNGKTFREQREKFHIWSNYSILKDFGSRALEARIVPKMAFYEREDVVIGWEVNDQSNVTCEMILWETVDRAIRTEYENAFHYVARTLTSTFVENKYSPDNNLTEDDIKCFKNDAQKKIEEVFLRDYNETYDMDGNATYHVTTGGLVIVWQGLKQKSLKALEIAANESAVSATGSNSRRKRSLPDESTGDISYAQLQFAYDTLRTYINQALGHIAEAWCLDQKRTAEVLHELSKINPSNILSAIFGVPVAARVVGDVISLAKCIEVNQSTVLIKGDMRKFSDDGKLEGCYSRPVVWFSMKNSTEVRLGQLGEDNEILLGTHRMETCQTQDYRIFVAGDIGYEFQQYVFTKKINLSEIDIIDTMIALKTEPLENIDFKVLELYSRDELAQANVFDLESIMREYNYQKKRLDFVVERVINPIPPALKGLDEMMNGMGAIGKGIGEAVGAVGGAIGSFIGALVTFVTNPFGAFVVFLFCVGCITLVITVYRRQRRAMQRPFDYFFPYASQTITSSVADSSIAVAYPGPEGTSGDAPPPYPGEAPYGYKDLSVDADTRVSSSSAGAGADFNEEDAVRMLRAIKRLDDKKRQEIEKSSKDSASNKNSETRRRPGIMDRLRRRGGYQKLNTEDDVHV</sequence>
<feature type="signal peptide" evidence="3">
    <location>
        <begin position="1"/>
        <end position="34"/>
    </location>
</feature>
<feature type="chain" id="PRO_0000038191" description="Envelope glycoprotein B">
    <location>
        <begin position="35"/>
        <end position="901"/>
    </location>
</feature>
<feature type="topological domain" description="Virion surface" evidence="3">
    <location>
        <begin position="35"/>
        <end position="736"/>
    </location>
</feature>
<feature type="transmembrane region" description="Helical" evidence="3">
    <location>
        <begin position="737"/>
        <end position="757"/>
    </location>
</feature>
<feature type="topological domain" description="Intravirion" evidence="3">
    <location>
        <begin position="758"/>
        <end position="901"/>
    </location>
</feature>
<feature type="region of interest" description="Involved in fusion and/or binding to host membrane" evidence="3">
    <location>
        <begin position="141"/>
        <end position="147"/>
    </location>
</feature>
<feature type="region of interest" description="Involved in fusion and/or binding to host membrane" evidence="3">
    <location>
        <begin position="226"/>
        <end position="233"/>
    </location>
</feature>
<feature type="region of interest" description="Hydrophobic membrane proximal region" evidence="3">
    <location>
        <begin position="683"/>
        <end position="734"/>
    </location>
</feature>
<feature type="region of interest" description="Hydrophobic membrane proximal region">
    <location>
        <begin position="714"/>
        <end position="734"/>
    </location>
</feature>
<feature type="region of interest" description="Disordered" evidence="4">
    <location>
        <begin position="794"/>
        <end position="813"/>
    </location>
</feature>
<feature type="region of interest" description="Disordered" evidence="4">
    <location>
        <begin position="852"/>
        <end position="901"/>
    </location>
</feature>
<feature type="short sequence motif" description="Internalization motif" evidence="3">
    <location>
        <begin position="890"/>
        <end position="893"/>
    </location>
</feature>
<feature type="compositionally biased region" description="Basic and acidic residues" evidence="4">
    <location>
        <begin position="852"/>
        <end position="864"/>
    </location>
</feature>
<feature type="compositionally biased region" description="Basic and acidic residues" evidence="4">
    <location>
        <begin position="872"/>
        <end position="883"/>
    </location>
</feature>
<feature type="site" description="Cleavage; by host furin" evidence="2">
    <location>
        <begin position="451"/>
        <end position="452"/>
    </location>
</feature>
<feature type="glycosylation site" description="N-linked (GlcNAc...) asparagine; by host" evidence="3">
    <location>
        <position position="53"/>
    </location>
</feature>
<feature type="glycosylation site" description="N-linked (GlcNAc...) asparagine; by host" evidence="3">
    <location>
        <position position="60"/>
    </location>
</feature>
<feature type="glycosylation site" description="N-linked (GlcNAc...) asparagine; by host" evidence="3">
    <location>
        <position position="66"/>
    </location>
</feature>
<feature type="glycosylation site" description="N-linked (GlcNAc...) asparagine; by host" evidence="3">
    <location>
        <position position="197"/>
    </location>
</feature>
<feature type="glycosylation site" description="N-linked (GlcNAc...) asparagine; by host" evidence="3">
    <location>
        <position position="270"/>
    </location>
</feature>
<feature type="glycosylation site" description="N-linked (GlcNAc...) asparagine; by host" evidence="3">
    <location>
        <position position="289"/>
    </location>
</feature>
<feature type="glycosylation site" description="N-linked (GlcNAc...) asparagine; by host" evidence="3">
    <location>
        <position position="328"/>
    </location>
</feature>
<feature type="glycosylation site" description="N-linked (GlcNAc...) asparagine; by host" evidence="3">
    <location>
        <position position="372"/>
    </location>
</feature>
<feature type="glycosylation site" description="N-linked (GlcNAc...) asparagine; by host" evidence="3">
    <location>
        <position position="398"/>
    </location>
</feature>
<feature type="glycosylation site" description="N-linked (GlcNAc...) asparagine; by host" evidence="3">
    <location>
        <position position="406"/>
    </location>
</feature>
<feature type="glycosylation site" description="N-linked (GlcNAc...) asparagine; by host" evidence="3">
    <location>
        <position position="436"/>
    </location>
</feature>
<feature type="glycosylation site" description="N-linked (GlcNAc...) asparagine; by host" evidence="3">
    <location>
        <position position="537"/>
    </location>
</feature>
<feature type="glycosylation site" description="N-linked (GlcNAc...) asparagine; by host" evidence="3">
    <location>
        <position position="571"/>
    </location>
</feature>
<feature type="glycosylation site" description="N-linked (GlcNAc...) asparagine; by host" evidence="3">
    <location>
        <position position="623"/>
    </location>
</feature>
<feature type="disulfide bond" evidence="3">
    <location>
        <begin position="84"/>
        <end position="533"/>
    </location>
</feature>
<feature type="disulfide bond" evidence="3">
    <location>
        <begin position="101"/>
        <end position="489"/>
    </location>
</feature>
<feature type="disulfide bond" evidence="3">
    <location>
        <begin position="174"/>
        <end position="239"/>
    </location>
</feature>
<feature type="disulfide bond" evidence="3">
    <location>
        <begin position="331"/>
        <end position="380"/>
    </location>
</feature>
<feature type="disulfide bond" evidence="3">
    <location>
        <begin position="559"/>
        <end position="596"/>
    </location>
</feature>
<evidence type="ECO:0000250" key="1"/>
<evidence type="ECO:0000255" key="2"/>
<evidence type="ECO:0000255" key="3">
    <source>
        <dbReference type="HAMAP-Rule" id="MF_04032"/>
    </source>
</evidence>
<evidence type="ECO:0000256" key="4">
    <source>
        <dbReference type="SAM" id="MobiDB-lite"/>
    </source>
</evidence>
<organismHost>
    <name type="scientific">Cavia porcellus</name>
    <name type="common">Guinea pig</name>
    <dbReference type="NCBI Taxonomy" id="10141"/>
</organismHost>